<comment type="function">
    <text evidence="1">Binds to 23S rRNA. Forms part of two intersubunit bridges in the 70S ribosome.</text>
</comment>
<comment type="subunit">
    <text evidence="1">Part of the 50S ribosomal subunit. Forms a cluster with proteins L3 and L19. In the 70S ribosome, L14 and L19 interact and together make contacts with the 16S rRNA in bridges B5 and B8.</text>
</comment>
<comment type="similarity">
    <text evidence="1">Belongs to the universal ribosomal protein uL14 family.</text>
</comment>
<reference key="1">
    <citation type="journal article" date="2006" name="J. Bacteriol.">
        <title>Comparative genomic evidence for a close relationship between the dimorphic prosthecate bacteria Hyphomonas neptunium and Caulobacter crescentus.</title>
        <authorList>
            <person name="Badger J.H."/>
            <person name="Hoover T.R."/>
            <person name="Brun Y.V."/>
            <person name="Weiner R.M."/>
            <person name="Laub M.T."/>
            <person name="Alexandre G."/>
            <person name="Mrazek J."/>
            <person name="Ren Q."/>
            <person name="Paulsen I.T."/>
            <person name="Nelson K.E."/>
            <person name="Khouri H.M."/>
            <person name="Radune D."/>
            <person name="Sosa J."/>
            <person name="Dodson R.J."/>
            <person name="Sullivan S.A."/>
            <person name="Rosovitz M.J."/>
            <person name="Madupu R."/>
            <person name="Brinkac L.M."/>
            <person name="Durkin A.S."/>
            <person name="Daugherty S.C."/>
            <person name="Kothari S.P."/>
            <person name="Giglio M.G."/>
            <person name="Zhou L."/>
            <person name="Haft D.H."/>
            <person name="Selengut J.D."/>
            <person name="Davidsen T.M."/>
            <person name="Yang Q."/>
            <person name="Zafar N."/>
            <person name="Ward N.L."/>
        </authorList>
    </citation>
    <scope>NUCLEOTIDE SEQUENCE [LARGE SCALE GENOMIC DNA]</scope>
    <source>
        <strain>ATCC 15444</strain>
    </source>
</reference>
<sequence length="122" mass="13159">MIQMQSHLRVADNSGARRVMCIKVLGGAGRRYASVGDIIVVSIKEAIPTGRVKKGDVRKAVVVRVAKDINRADGSTIRFDSNAAVLINNNGEPIGTRVFGPVPRELRAKNQVKIANMAPEVL</sequence>
<feature type="chain" id="PRO_0000266496" description="Large ribosomal subunit protein uL14">
    <location>
        <begin position="1"/>
        <end position="122"/>
    </location>
</feature>
<organism>
    <name type="scientific">Hyphomonas neptunium (strain ATCC 15444)</name>
    <dbReference type="NCBI Taxonomy" id="228405"/>
    <lineage>
        <taxon>Bacteria</taxon>
        <taxon>Pseudomonadati</taxon>
        <taxon>Pseudomonadota</taxon>
        <taxon>Alphaproteobacteria</taxon>
        <taxon>Hyphomonadales</taxon>
        <taxon>Hyphomonadaceae</taxon>
        <taxon>Hyphomonas</taxon>
    </lineage>
</organism>
<protein>
    <recommendedName>
        <fullName evidence="1">Large ribosomal subunit protein uL14</fullName>
    </recommendedName>
    <alternativeName>
        <fullName evidence="2">50S ribosomal protein L14</fullName>
    </alternativeName>
</protein>
<evidence type="ECO:0000255" key="1">
    <source>
        <dbReference type="HAMAP-Rule" id="MF_01367"/>
    </source>
</evidence>
<evidence type="ECO:0000305" key="2"/>
<dbReference type="EMBL" id="CP000158">
    <property type="protein sequence ID" value="ABI77862.1"/>
    <property type="molecule type" value="Genomic_DNA"/>
</dbReference>
<dbReference type="RefSeq" id="WP_011647816.1">
    <property type="nucleotide sequence ID" value="NC_008358.1"/>
</dbReference>
<dbReference type="SMR" id="Q0BYC4"/>
<dbReference type="STRING" id="228405.HNE_2841"/>
<dbReference type="KEGG" id="hne:HNE_2841"/>
<dbReference type="eggNOG" id="COG0093">
    <property type="taxonomic scope" value="Bacteria"/>
</dbReference>
<dbReference type="HOGENOM" id="CLU_095071_2_1_5"/>
<dbReference type="Proteomes" id="UP000001959">
    <property type="component" value="Chromosome"/>
</dbReference>
<dbReference type="GO" id="GO:0022625">
    <property type="term" value="C:cytosolic large ribosomal subunit"/>
    <property type="evidence" value="ECO:0007669"/>
    <property type="project" value="TreeGrafter"/>
</dbReference>
<dbReference type="GO" id="GO:0070180">
    <property type="term" value="F:large ribosomal subunit rRNA binding"/>
    <property type="evidence" value="ECO:0007669"/>
    <property type="project" value="TreeGrafter"/>
</dbReference>
<dbReference type="GO" id="GO:0003735">
    <property type="term" value="F:structural constituent of ribosome"/>
    <property type="evidence" value="ECO:0007669"/>
    <property type="project" value="InterPro"/>
</dbReference>
<dbReference type="GO" id="GO:0006412">
    <property type="term" value="P:translation"/>
    <property type="evidence" value="ECO:0007669"/>
    <property type="project" value="UniProtKB-UniRule"/>
</dbReference>
<dbReference type="CDD" id="cd00337">
    <property type="entry name" value="Ribosomal_uL14"/>
    <property type="match status" value="1"/>
</dbReference>
<dbReference type="FunFam" id="2.40.150.20:FF:000001">
    <property type="entry name" value="50S ribosomal protein L14"/>
    <property type="match status" value="1"/>
</dbReference>
<dbReference type="Gene3D" id="2.40.150.20">
    <property type="entry name" value="Ribosomal protein L14"/>
    <property type="match status" value="1"/>
</dbReference>
<dbReference type="HAMAP" id="MF_01367">
    <property type="entry name" value="Ribosomal_uL14"/>
    <property type="match status" value="1"/>
</dbReference>
<dbReference type="InterPro" id="IPR000218">
    <property type="entry name" value="Ribosomal_uL14"/>
</dbReference>
<dbReference type="InterPro" id="IPR005745">
    <property type="entry name" value="Ribosomal_uL14_bac-type"/>
</dbReference>
<dbReference type="InterPro" id="IPR019972">
    <property type="entry name" value="Ribosomal_uL14_CS"/>
</dbReference>
<dbReference type="InterPro" id="IPR036853">
    <property type="entry name" value="Ribosomal_uL14_sf"/>
</dbReference>
<dbReference type="NCBIfam" id="TIGR01067">
    <property type="entry name" value="rplN_bact"/>
    <property type="match status" value="1"/>
</dbReference>
<dbReference type="PANTHER" id="PTHR11761">
    <property type="entry name" value="50S/60S RIBOSOMAL PROTEIN L14/L23"/>
    <property type="match status" value="1"/>
</dbReference>
<dbReference type="PANTHER" id="PTHR11761:SF3">
    <property type="entry name" value="LARGE RIBOSOMAL SUBUNIT PROTEIN UL14M"/>
    <property type="match status" value="1"/>
</dbReference>
<dbReference type="Pfam" id="PF00238">
    <property type="entry name" value="Ribosomal_L14"/>
    <property type="match status" value="1"/>
</dbReference>
<dbReference type="SMART" id="SM01374">
    <property type="entry name" value="Ribosomal_L14"/>
    <property type="match status" value="1"/>
</dbReference>
<dbReference type="SUPFAM" id="SSF50193">
    <property type="entry name" value="Ribosomal protein L14"/>
    <property type="match status" value="1"/>
</dbReference>
<dbReference type="PROSITE" id="PS00049">
    <property type="entry name" value="RIBOSOMAL_L14"/>
    <property type="match status" value="1"/>
</dbReference>
<gene>
    <name evidence="1" type="primary">rplN</name>
    <name type="ordered locus">HNE_2841</name>
</gene>
<name>RL14_HYPNA</name>
<proteinExistence type="inferred from homology"/>
<accession>Q0BYC4</accession>
<keyword id="KW-1185">Reference proteome</keyword>
<keyword id="KW-0687">Ribonucleoprotein</keyword>
<keyword id="KW-0689">Ribosomal protein</keyword>
<keyword id="KW-0694">RNA-binding</keyword>
<keyword id="KW-0699">rRNA-binding</keyword>